<gene>
    <name type="primary">ILKAP</name>
</gene>
<comment type="function">
    <text evidence="1">Protein phosphatase that may play a role in regulation of cell cycle progression via dephosphorylation of its substrates whose appropriate phosphorylation states might be crucial for cell proliferation. Selectively associates with integrin linked kinase (ILK), to modulate cell adhesion and growth factor signaling. Inhibits the ILK-GSK3B signaling axis and may play an important role in inhibiting oncogenic transformation (By similarity).</text>
</comment>
<comment type="catalytic activity">
    <reaction>
        <text>O-phospho-L-seryl-[protein] + H2O = L-seryl-[protein] + phosphate</text>
        <dbReference type="Rhea" id="RHEA:20629"/>
        <dbReference type="Rhea" id="RHEA-COMP:9863"/>
        <dbReference type="Rhea" id="RHEA-COMP:11604"/>
        <dbReference type="ChEBI" id="CHEBI:15377"/>
        <dbReference type="ChEBI" id="CHEBI:29999"/>
        <dbReference type="ChEBI" id="CHEBI:43474"/>
        <dbReference type="ChEBI" id="CHEBI:83421"/>
        <dbReference type="EC" id="3.1.3.16"/>
    </reaction>
</comment>
<comment type="catalytic activity">
    <reaction>
        <text>O-phospho-L-threonyl-[protein] + H2O = L-threonyl-[protein] + phosphate</text>
        <dbReference type="Rhea" id="RHEA:47004"/>
        <dbReference type="Rhea" id="RHEA-COMP:11060"/>
        <dbReference type="Rhea" id="RHEA-COMP:11605"/>
        <dbReference type="ChEBI" id="CHEBI:15377"/>
        <dbReference type="ChEBI" id="CHEBI:30013"/>
        <dbReference type="ChEBI" id="CHEBI:43474"/>
        <dbReference type="ChEBI" id="CHEBI:61977"/>
        <dbReference type="EC" id="3.1.3.16"/>
    </reaction>
</comment>
<comment type="cofactor">
    <cofactor evidence="1">
        <name>Mg(2+)</name>
        <dbReference type="ChEBI" id="CHEBI:18420"/>
    </cofactor>
    <cofactor evidence="1">
        <name>Mn(2+)</name>
        <dbReference type="ChEBI" id="CHEBI:29035"/>
    </cofactor>
    <text evidence="1">Binds 2 magnesium or manganese ions per subunit.</text>
</comment>
<comment type="subunit">
    <text evidence="1">Interacts with ILK.</text>
</comment>
<comment type="subcellular location">
    <subcellularLocation>
        <location evidence="1">Cytoplasm</location>
    </subcellularLocation>
</comment>
<comment type="similarity">
    <text evidence="5">Belongs to the PP2C family.</text>
</comment>
<organism>
    <name type="scientific">Bos taurus</name>
    <name type="common">Bovine</name>
    <dbReference type="NCBI Taxonomy" id="9913"/>
    <lineage>
        <taxon>Eukaryota</taxon>
        <taxon>Metazoa</taxon>
        <taxon>Chordata</taxon>
        <taxon>Craniata</taxon>
        <taxon>Vertebrata</taxon>
        <taxon>Euteleostomi</taxon>
        <taxon>Mammalia</taxon>
        <taxon>Eutheria</taxon>
        <taxon>Laurasiatheria</taxon>
        <taxon>Artiodactyla</taxon>
        <taxon>Ruminantia</taxon>
        <taxon>Pecora</taxon>
        <taxon>Bovidae</taxon>
        <taxon>Bovinae</taxon>
        <taxon>Bos</taxon>
    </lineage>
</organism>
<name>ILKAP_BOVIN</name>
<evidence type="ECO:0000250" key="1"/>
<evidence type="ECO:0000250" key="2">
    <source>
        <dbReference type="UniProtKB" id="Q9H0C8"/>
    </source>
</evidence>
<evidence type="ECO:0000255" key="3">
    <source>
        <dbReference type="PROSITE-ProRule" id="PRU01082"/>
    </source>
</evidence>
<evidence type="ECO:0000256" key="4">
    <source>
        <dbReference type="SAM" id="MobiDB-lite"/>
    </source>
</evidence>
<evidence type="ECO:0000305" key="5"/>
<dbReference type="EC" id="3.1.3.16"/>
<dbReference type="EMBL" id="BC122677">
    <property type="protein sequence ID" value="AAI22678.1"/>
    <property type="molecule type" value="mRNA"/>
</dbReference>
<dbReference type="RefSeq" id="NP_001069123.1">
    <property type="nucleotide sequence ID" value="NM_001075655.1"/>
</dbReference>
<dbReference type="SMR" id="Q0IIF0"/>
<dbReference type="FunCoup" id="Q0IIF0">
    <property type="interactions" value="3224"/>
</dbReference>
<dbReference type="STRING" id="9913.ENSBTAP00000062322"/>
<dbReference type="PaxDb" id="9913-ENSBTAP00000013428"/>
<dbReference type="Ensembl" id="ENSBTAT00000013428.7">
    <property type="protein sequence ID" value="ENSBTAP00000013428.5"/>
    <property type="gene ID" value="ENSBTAG00000010176.7"/>
</dbReference>
<dbReference type="GeneID" id="514223"/>
<dbReference type="KEGG" id="bta:514223"/>
<dbReference type="CTD" id="80895"/>
<dbReference type="VEuPathDB" id="HostDB:ENSBTAG00000010176"/>
<dbReference type="VGNC" id="VGNC:30178">
    <property type="gene designation" value="ILKAP"/>
</dbReference>
<dbReference type="eggNOG" id="KOG0698">
    <property type="taxonomic scope" value="Eukaryota"/>
</dbReference>
<dbReference type="GeneTree" id="ENSGT00940000157403"/>
<dbReference type="HOGENOM" id="CLU_013173_1_6_1"/>
<dbReference type="InParanoid" id="Q0IIF0"/>
<dbReference type="OrthoDB" id="10264738at2759"/>
<dbReference type="TreeFam" id="TF313513"/>
<dbReference type="Proteomes" id="UP000009136">
    <property type="component" value="Chromosome 3"/>
</dbReference>
<dbReference type="Bgee" id="ENSBTAG00000010176">
    <property type="expression patterns" value="Expressed in retina and 109 other cell types or tissues"/>
</dbReference>
<dbReference type="GO" id="GO:0005737">
    <property type="term" value="C:cytoplasm"/>
    <property type="evidence" value="ECO:0007669"/>
    <property type="project" value="UniProtKB-SubCell"/>
</dbReference>
<dbReference type="GO" id="GO:0046872">
    <property type="term" value="F:metal ion binding"/>
    <property type="evidence" value="ECO:0007669"/>
    <property type="project" value="UniProtKB-KW"/>
</dbReference>
<dbReference type="GO" id="GO:0004722">
    <property type="term" value="F:protein serine/threonine phosphatase activity"/>
    <property type="evidence" value="ECO:0007669"/>
    <property type="project" value="UniProtKB-EC"/>
</dbReference>
<dbReference type="GO" id="GO:0007165">
    <property type="term" value="P:signal transduction"/>
    <property type="evidence" value="ECO:0000318"/>
    <property type="project" value="GO_Central"/>
</dbReference>
<dbReference type="CDD" id="cd00143">
    <property type="entry name" value="PP2Cc"/>
    <property type="match status" value="1"/>
</dbReference>
<dbReference type="FunFam" id="3.60.40.10:FF:000018">
    <property type="entry name" value="Integrin-linked kinase-associated serine/threonine phosphatase 2C"/>
    <property type="match status" value="1"/>
</dbReference>
<dbReference type="Gene3D" id="3.60.40.10">
    <property type="entry name" value="PPM-type phosphatase domain"/>
    <property type="match status" value="1"/>
</dbReference>
<dbReference type="InterPro" id="IPR015655">
    <property type="entry name" value="PP2C"/>
</dbReference>
<dbReference type="InterPro" id="IPR000222">
    <property type="entry name" value="PP2C_BS"/>
</dbReference>
<dbReference type="InterPro" id="IPR036457">
    <property type="entry name" value="PPM-type-like_dom_sf"/>
</dbReference>
<dbReference type="InterPro" id="IPR001932">
    <property type="entry name" value="PPM-type_phosphatase-like_dom"/>
</dbReference>
<dbReference type="PANTHER" id="PTHR47992">
    <property type="entry name" value="PROTEIN PHOSPHATASE"/>
    <property type="match status" value="1"/>
</dbReference>
<dbReference type="Pfam" id="PF00481">
    <property type="entry name" value="PP2C"/>
    <property type="match status" value="1"/>
</dbReference>
<dbReference type="SMART" id="SM00331">
    <property type="entry name" value="PP2C_SIG"/>
    <property type="match status" value="1"/>
</dbReference>
<dbReference type="SMART" id="SM00332">
    <property type="entry name" value="PP2Cc"/>
    <property type="match status" value="1"/>
</dbReference>
<dbReference type="SUPFAM" id="SSF81606">
    <property type="entry name" value="PP2C-like"/>
    <property type="match status" value="1"/>
</dbReference>
<dbReference type="PROSITE" id="PS01032">
    <property type="entry name" value="PPM_1"/>
    <property type="match status" value="1"/>
</dbReference>
<dbReference type="PROSITE" id="PS51746">
    <property type="entry name" value="PPM_2"/>
    <property type="match status" value="1"/>
</dbReference>
<feature type="chain" id="PRO_0000272270" description="Integrin-linked kinase-associated serine/threonine phosphatase 2C">
    <location>
        <begin position="1"/>
        <end position="370"/>
    </location>
</feature>
<feature type="domain" description="PPM-type phosphatase" evidence="3">
    <location>
        <begin position="86"/>
        <end position="368"/>
    </location>
</feature>
<feature type="region of interest" description="Disordered" evidence="4">
    <location>
        <begin position="1"/>
        <end position="69"/>
    </location>
</feature>
<feature type="compositionally biased region" description="Low complexity" evidence="4">
    <location>
        <begin position="33"/>
        <end position="45"/>
    </location>
</feature>
<feature type="compositionally biased region" description="Basic and acidic residues" evidence="4">
    <location>
        <begin position="46"/>
        <end position="69"/>
    </location>
</feature>
<feature type="binding site" evidence="1">
    <location>
        <position position="130"/>
    </location>
    <ligand>
        <name>Mn(2+)</name>
        <dbReference type="ChEBI" id="CHEBI:29035"/>
        <label>1</label>
    </ligand>
</feature>
<feature type="binding site" evidence="1">
    <location>
        <position position="130"/>
    </location>
    <ligand>
        <name>Mn(2+)</name>
        <dbReference type="ChEBI" id="CHEBI:29035"/>
        <label>2</label>
    </ligand>
</feature>
<feature type="binding site" evidence="1">
    <location>
        <position position="131"/>
    </location>
    <ligand>
        <name>Mn(2+)</name>
        <dbReference type="ChEBI" id="CHEBI:29035"/>
        <label>1</label>
    </ligand>
</feature>
<feature type="binding site" evidence="1">
    <location>
        <position position="304"/>
    </location>
    <ligand>
        <name>Mn(2+)</name>
        <dbReference type="ChEBI" id="CHEBI:29035"/>
        <label>2</label>
    </ligand>
</feature>
<feature type="binding site" evidence="1">
    <location>
        <position position="359"/>
    </location>
    <ligand>
        <name>Mn(2+)</name>
        <dbReference type="ChEBI" id="CHEBI:29035"/>
        <label>2</label>
    </ligand>
</feature>
<feature type="modified residue" description="N-acetylmethionine" evidence="2">
    <location>
        <position position="1"/>
    </location>
</feature>
<feature type="modified residue" description="Phosphoserine" evidence="2">
    <location>
        <position position="13"/>
    </location>
</feature>
<feature type="modified residue" description="N6-acetyllysine" evidence="2">
    <location>
        <position position="188"/>
    </location>
</feature>
<sequence>MDLFGDLPEPERSPRPAAGSGGPLLFDDLPPASSGDSGSLDTSLSEEVKNEGKGAKRKASDEEKNGSEELVEKKVCKASSVIFSLKGYVAERKGEREEMQDAHVILNDITAECQPPSALVTRVSYFAVFDGHGGIRASKFAAQNLHQNLIRKFPKGDGISVEKTVKRCLLDTFKHTDEEFLKQASSQKPAWKDGSTATCVLAVDNTLYIANLGDSRAILCRYNEESQKHAALSLSKEHNPTQYEERMRIQKAGGNVRDGRVLGVLEVSRSIGDGQYKRCGVTSVPDIRRCQLTPNDRFILLACDGLFKVFTPEEAVNFILSCLEDEKIQRREGKPTVDARYEAACNRLANKAVQRGSADNVTVMVVRIGL</sequence>
<keyword id="KW-0007">Acetylation</keyword>
<keyword id="KW-0963">Cytoplasm</keyword>
<keyword id="KW-0378">Hydrolase</keyword>
<keyword id="KW-0460">Magnesium</keyword>
<keyword id="KW-0464">Manganese</keyword>
<keyword id="KW-0479">Metal-binding</keyword>
<keyword id="KW-0597">Phosphoprotein</keyword>
<keyword id="KW-0904">Protein phosphatase</keyword>
<keyword id="KW-1185">Reference proteome</keyword>
<proteinExistence type="evidence at transcript level"/>
<accession>Q0IIF0</accession>
<protein>
    <recommendedName>
        <fullName>Integrin-linked kinase-associated serine/threonine phosphatase 2C</fullName>
        <shortName>ILKAP</shortName>
        <ecNumber>3.1.3.16</ecNumber>
    </recommendedName>
</protein>
<reference key="1">
    <citation type="submission" date="2006-08" db="EMBL/GenBank/DDBJ databases">
        <authorList>
            <consortium name="NIH - Mammalian Gene Collection (MGC) project"/>
        </authorList>
    </citation>
    <scope>NUCLEOTIDE SEQUENCE [LARGE SCALE MRNA]</scope>
    <source>
        <strain>Hereford</strain>
        <tissue>Hippocampus</tissue>
    </source>
</reference>